<sequence length="346" mass="37417">MTQSLTIRRPDDWHLHLRDGAMLEGVLPETTRHFARAIVMPNLVPPVVTGAEAAAYRERIMAALPAGARFEPLMVLYLTETTDPADVRAAAASGLVKAVKLYPAGATTNSASGVRDFDRVRGVLETMAEIGLPLCVHGEVTDPAVDIFDREAVFLERVLEPIRRATPGLRVVLEHVTTRDGLDYVRGGGPDMAGTLTTHHLIINRNHILAGGIRPHYYCLPVAKRETHRLALREAATGGEGCFFLGTDSAPHADAAKESACGCAGCFTATNTLSILAHVFEEEGALDRLEGFVALNGPAFYRLPPNEERITLRKGEPLVLPARIETGAGPVTLFDPGFPLLWHVES</sequence>
<keyword id="KW-0378">Hydrolase</keyword>
<keyword id="KW-0479">Metal-binding</keyword>
<keyword id="KW-0665">Pyrimidine biosynthesis</keyword>
<keyword id="KW-0862">Zinc</keyword>
<evidence type="ECO:0000255" key="1">
    <source>
        <dbReference type="HAMAP-Rule" id="MF_00219"/>
    </source>
</evidence>
<feature type="chain" id="PRO_1000024046" description="Dihydroorotase">
    <location>
        <begin position="1"/>
        <end position="346"/>
    </location>
</feature>
<feature type="active site" evidence="1">
    <location>
        <position position="248"/>
    </location>
</feature>
<feature type="binding site" evidence="1">
    <location>
        <position position="14"/>
    </location>
    <ligand>
        <name>Zn(2+)</name>
        <dbReference type="ChEBI" id="CHEBI:29105"/>
        <label>1</label>
    </ligand>
</feature>
<feature type="binding site" evidence="1">
    <location>
        <begin position="16"/>
        <end position="18"/>
    </location>
    <ligand>
        <name>substrate</name>
    </ligand>
</feature>
<feature type="binding site" evidence="1">
    <location>
        <position position="16"/>
    </location>
    <ligand>
        <name>Zn(2+)</name>
        <dbReference type="ChEBI" id="CHEBI:29105"/>
        <label>1</label>
    </ligand>
</feature>
<feature type="binding site" evidence="1">
    <location>
        <position position="42"/>
    </location>
    <ligand>
        <name>substrate</name>
    </ligand>
</feature>
<feature type="binding site" description="via carbamate group" evidence="1">
    <location>
        <position position="100"/>
    </location>
    <ligand>
        <name>Zn(2+)</name>
        <dbReference type="ChEBI" id="CHEBI:29105"/>
        <label>1</label>
    </ligand>
</feature>
<feature type="binding site" description="via carbamate group" evidence="1">
    <location>
        <position position="100"/>
    </location>
    <ligand>
        <name>Zn(2+)</name>
        <dbReference type="ChEBI" id="CHEBI:29105"/>
        <label>2</label>
    </ligand>
</feature>
<feature type="binding site" evidence="1">
    <location>
        <position position="137"/>
    </location>
    <ligand>
        <name>substrate</name>
    </ligand>
</feature>
<feature type="binding site" evidence="1">
    <location>
        <position position="137"/>
    </location>
    <ligand>
        <name>Zn(2+)</name>
        <dbReference type="ChEBI" id="CHEBI:29105"/>
        <label>2</label>
    </ligand>
</feature>
<feature type="binding site" evidence="1">
    <location>
        <position position="175"/>
    </location>
    <ligand>
        <name>Zn(2+)</name>
        <dbReference type="ChEBI" id="CHEBI:29105"/>
        <label>2</label>
    </ligand>
</feature>
<feature type="binding site" evidence="1">
    <location>
        <position position="220"/>
    </location>
    <ligand>
        <name>substrate</name>
    </ligand>
</feature>
<feature type="binding site" evidence="1">
    <location>
        <position position="248"/>
    </location>
    <ligand>
        <name>Zn(2+)</name>
        <dbReference type="ChEBI" id="CHEBI:29105"/>
        <label>1</label>
    </ligand>
</feature>
<feature type="binding site" evidence="1">
    <location>
        <position position="252"/>
    </location>
    <ligand>
        <name>substrate</name>
    </ligand>
</feature>
<feature type="binding site" evidence="1">
    <location>
        <position position="264"/>
    </location>
    <ligand>
        <name>substrate</name>
    </ligand>
</feature>
<feature type="modified residue" description="N6-carboxylysine" evidence="1">
    <location>
        <position position="100"/>
    </location>
</feature>
<comment type="function">
    <text evidence="1">Catalyzes the reversible cyclization of carbamoyl aspartate to dihydroorotate.</text>
</comment>
<comment type="catalytic activity">
    <reaction evidence="1">
        <text>(S)-dihydroorotate + H2O = N-carbamoyl-L-aspartate + H(+)</text>
        <dbReference type="Rhea" id="RHEA:24296"/>
        <dbReference type="ChEBI" id="CHEBI:15377"/>
        <dbReference type="ChEBI" id="CHEBI:15378"/>
        <dbReference type="ChEBI" id="CHEBI:30864"/>
        <dbReference type="ChEBI" id="CHEBI:32814"/>
        <dbReference type="EC" id="3.5.2.3"/>
    </reaction>
</comment>
<comment type="cofactor">
    <cofactor evidence="1">
        <name>Zn(2+)</name>
        <dbReference type="ChEBI" id="CHEBI:29105"/>
    </cofactor>
    <text evidence="1">Binds 2 Zn(2+) ions per subunit.</text>
</comment>
<comment type="pathway">
    <text evidence="1">Pyrimidine metabolism; UMP biosynthesis via de novo pathway; (S)-dihydroorotate from bicarbonate: step 3/3.</text>
</comment>
<comment type="subunit">
    <text evidence="1">Homodimer.</text>
</comment>
<comment type="similarity">
    <text evidence="1">Belongs to the metallo-dependent hydrolases superfamily. DHOase family. Class II DHOase subfamily.</text>
</comment>
<dbReference type="EC" id="3.5.2.3" evidence="1"/>
<dbReference type="EMBL" id="CP000661">
    <property type="protein sequence ID" value="ABP69231.1"/>
    <property type="molecule type" value="Genomic_DNA"/>
</dbReference>
<dbReference type="SMR" id="A4WPB7"/>
<dbReference type="STRING" id="349102.Rsph17025_0325"/>
<dbReference type="MEROPS" id="M38.A02"/>
<dbReference type="KEGG" id="rsq:Rsph17025_0325"/>
<dbReference type="eggNOG" id="COG0418">
    <property type="taxonomic scope" value="Bacteria"/>
</dbReference>
<dbReference type="HOGENOM" id="CLU_041558_1_0_5"/>
<dbReference type="BioCyc" id="RSPH349102:G1G8M-332-MONOMER"/>
<dbReference type="UniPathway" id="UPA00070">
    <property type="reaction ID" value="UER00117"/>
</dbReference>
<dbReference type="GO" id="GO:0005829">
    <property type="term" value="C:cytosol"/>
    <property type="evidence" value="ECO:0007669"/>
    <property type="project" value="TreeGrafter"/>
</dbReference>
<dbReference type="GO" id="GO:0004151">
    <property type="term" value="F:dihydroorotase activity"/>
    <property type="evidence" value="ECO:0007669"/>
    <property type="project" value="UniProtKB-UniRule"/>
</dbReference>
<dbReference type="GO" id="GO:0008270">
    <property type="term" value="F:zinc ion binding"/>
    <property type="evidence" value="ECO:0007669"/>
    <property type="project" value="UniProtKB-UniRule"/>
</dbReference>
<dbReference type="GO" id="GO:0006207">
    <property type="term" value="P:'de novo' pyrimidine nucleobase biosynthetic process"/>
    <property type="evidence" value="ECO:0007669"/>
    <property type="project" value="TreeGrafter"/>
</dbReference>
<dbReference type="GO" id="GO:0044205">
    <property type="term" value="P:'de novo' UMP biosynthetic process"/>
    <property type="evidence" value="ECO:0007669"/>
    <property type="project" value="UniProtKB-UniRule"/>
</dbReference>
<dbReference type="CDD" id="cd01294">
    <property type="entry name" value="DHOase"/>
    <property type="match status" value="1"/>
</dbReference>
<dbReference type="Gene3D" id="3.20.20.140">
    <property type="entry name" value="Metal-dependent hydrolases"/>
    <property type="match status" value="1"/>
</dbReference>
<dbReference type="HAMAP" id="MF_00219">
    <property type="entry name" value="PyrC_classII"/>
    <property type="match status" value="1"/>
</dbReference>
<dbReference type="InterPro" id="IPR006680">
    <property type="entry name" value="Amidohydro-rel"/>
</dbReference>
<dbReference type="InterPro" id="IPR004721">
    <property type="entry name" value="DHOdimr"/>
</dbReference>
<dbReference type="InterPro" id="IPR002195">
    <property type="entry name" value="Dihydroorotase_CS"/>
</dbReference>
<dbReference type="InterPro" id="IPR032466">
    <property type="entry name" value="Metal_Hydrolase"/>
</dbReference>
<dbReference type="NCBIfam" id="TIGR00856">
    <property type="entry name" value="pyrC_dimer"/>
    <property type="match status" value="1"/>
</dbReference>
<dbReference type="PANTHER" id="PTHR43137">
    <property type="entry name" value="DIHYDROOROTASE"/>
    <property type="match status" value="1"/>
</dbReference>
<dbReference type="PANTHER" id="PTHR43137:SF1">
    <property type="entry name" value="DIHYDROOROTASE"/>
    <property type="match status" value="1"/>
</dbReference>
<dbReference type="Pfam" id="PF01979">
    <property type="entry name" value="Amidohydro_1"/>
    <property type="match status" value="1"/>
</dbReference>
<dbReference type="PIRSF" id="PIRSF001237">
    <property type="entry name" value="DHOdimr"/>
    <property type="match status" value="1"/>
</dbReference>
<dbReference type="SUPFAM" id="SSF51556">
    <property type="entry name" value="Metallo-dependent hydrolases"/>
    <property type="match status" value="1"/>
</dbReference>
<dbReference type="PROSITE" id="PS00482">
    <property type="entry name" value="DIHYDROOROTASE_1"/>
    <property type="match status" value="1"/>
</dbReference>
<dbReference type="PROSITE" id="PS00483">
    <property type="entry name" value="DIHYDROOROTASE_2"/>
    <property type="match status" value="1"/>
</dbReference>
<accession>A4WPB7</accession>
<reference key="1">
    <citation type="submission" date="2007-04" db="EMBL/GenBank/DDBJ databases">
        <title>Complete sequence of chromosome of Rhodobacter sphaeroides ATCC 17025.</title>
        <authorList>
            <consortium name="US DOE Joint Genome Institute"/>
            <person name="Copeland A."/>
            <person name="Lucas S."/>
            <person name="Lapidus A."/>
            <person name="Barry K."/>
            <person name="Detter J.C."/>
            <person name="Glavina del Rio T."/>
            <person name="Hammon N."/>
            <person name="Israni S."/>
            <person name="Dalin E."/>
            <person name="Tice H."/>
            <person name="Pitluck S."/>
            <person name="Chertkov O."/>
            <person name="Brettin T."/>
            <person name="Bruce D."/>
            <person name="Han C."/>
            <person name="Schmutz J."/>
            <person name="Larimer F."/>
            <person name="Land M."/>
            <person name="Hauser L."/>
            <person name="Kyrpides N."/>
            <person name="Kim E."/>
            <person name="Richardson P."/>
            <person name="Mackenzie C."/>
            <person name="Choudhary M."/>
            <person name="Donohue T.J."/>
            <person name="Kaplan S."/>
        </authorList>
    </citation>
    <scope>NUCLEOTIDE SEQUENCE [LARGE SCALE GENOMIC DNA]</scope>
    <source>
        <strain>ATCC 17025 / ATH 2.4.3</strain>
    </source>
</reference>
<name>PYRC_CERS5</name>
<proteinExistence type="inferred from homology"/>
<protein>
    <recommendedName>
        <fullName evidence="1">Dihydroorotase</fullName>
        <shortName evidence="1">DHOase</shortName>
        <ecNumber evidence="1">3.5.2.3</ecNumber>
    </recommendedName>
</protein>
<organism>
    <name type="scientific">Cereibacter sphaeroides (strain ATCC 17025 / ATH 2.4.3)</name>
    <name type="common">Rhodobacter sphaeroides</name>
    <dbReference type="NCBI Taxonomy" id="349102"/>
    <lineage>
        <taxon>Bacteria</taxon>
        <taxon>Pseudomonadati</taxon>
        <taxon>Pseudomonadota</taxon>
        <taxon>Alphaproteobacteria</taxon>
        <taxon>Rhodobacterales</taxon>
        <taxon>Paracoccaceae</taxon>
        <taxon>Cereibacter</taxon>
    </lineage>
</organism>
<gene>
    <name evidence="1" type="primary">pyrC</name>
    <name type="ordered locus">Rsph17025_0325</name>
</gene>